<keyword id="KW-0165">Cleavage on pair of basic residues</keyword>
<keyword id="KW-0903">Direct protein sequencing</keyword>
<keyword id="KW-0527">Neuropeptide</keyword>
<keyword id="KW-1267">Proteomics identification</keyword>
<keyword id="KW-1185">Reference proteome</keyword>
<keyword id="KW-0964">Secreted</keyword>
<keyword id="KW-0732">Signal</keyword>
<proteinExistence type="evidence at protein level"/>
<reference key="1">
    <citation type="journal article" date="2002" name="J. Biol. Chem.">
        <title>Identification of a neuropeptide modified with bromine as an endogenous ligand for GPR7.</title>
        <authorList>
            <person name="Fujii R."/>
            <person name="Yoshida H."/>
            <person name="Fukusumi S."/>
            <person name="Habata Y."/>
            <person name="Hosoya M."/>
            <person name="Kawamata Y."/>
            <person name="Yano T."/>
            <person name="Hinuma S."/>
            <person name="Kitada C."/>
            <person name="Asami T."/>
            <person name="Mori M."/>
            <person name="Fujisawa Y."/>
            <person name="Fujino M."/>
        </authorList>
    </citation>
    <scope>NUCLEOTIDE SEQUENCE [MRNA]</scope>
    <scope>PROTEIN SEQUENCE OF 25-48</scope>
    <scope>SYNTHESIS OF NPB23</scope>
</reference>
<reference key="2">
    <citation type="journal article" date="2003" name="J. Biol. Chem.">
        <title>Identification of natural ligands for the orphan G protein-coupled receptors GPR7 and GPR8.</title>
        <authorList>
            <person name="Brezillon S."/>
            <person name="Lannoy V."/>
            <person name="Franssen J.-D."/>
            <person name="Le Poul E."/>
            <person name="Dupriez V."/>
            <person name="Lucchetti J."/>
            <person name="Detheux M."/>
            <person name="Parmentier M."/>
        </authorList>
    </citation>
    <scope>NUCLEOTIDE SEQUENCE [MRNA]</scope>
    <scope>CHARACTERIZATION</scope>
</reference>
<reference key="3">
    <citation type="journal article" date="2004" name="Nature">
        <title>The DNA sequence and comparative analysis of human chromosome 10.</title>
        <authorList>
            <person name="Deloukas P."/>
            <person name="Earthrowl M.E."/>
            <person name="Grafham D.V."/>
            <person name="Rubenfield M."/>
            <person name="French L."/>
            <person name="Steward C.A."/>
            <person name="Sims S.K."/>
            <person name="Jones M.C."/>
            <person name="Searle S."/>
            <person name="Scott C."/>
            <person name="Howe K."/>
            <person name="Hunt S.E."/>
            <person name="Andrews T.D."/>
            <person name="Gilbert J.G.R."/>
            <person name="Swarbreck D."/>
            <person name="Ashurst J.L."/>
            <person name="Taylor A."/>
            <person name="Battles J."/>
            <person name="Bird C.P."/>
            <person name="Ainscough R."/>
            <person name="Almeida J.P."/>
            <person name="Ashwell R.I.S."/>
            <person name="Ambrose K.D."/>
            <person name="Babbage A.K."/>
            <person name="Bagguley C.L."/>
            <person name="Bailey J."/>
            <person name="Banerjee R."/>
            <person name="Bates K."/>
            <person name="Beasley H."/>
            <person name="Bray-Allen S."/>
            <person name="Brown A.J."/>
            <person name="Brown J.Y."/>
            <person name="Burford D.C."/>
            <person name="Burrill W."/>
            <person name="Burton J."/>
            <person name="Cahill P."/>
            <person name="Camire D."/>
            <person name="Carter N.P."/>
            <person name="Chapman J.C."/>
            <person name="Clark S.Y."/>
            <person name="Clarke G."/>
            <person name="Clee C.M."/>
            <person name="Clegg S."/>
            <person name="Corby N."/>
            <person name="Coulson A."/>
            <person name="Dhami P."/>
            <person name="Dutta I."/>
            <person name="Dunn M."/>
            <person name="Faulkner L."/>
            <person name="Frankish A."/>
            <person name="Frankland J.A."/>
            <person name="Garner P."/>
            <person name="Garnett J."/>
            <person name="Gribble S."/>
            <person name="Griffiths C."/>
            <person name="Grocock R."/>
            <person name="Gustafson E."/>
            <person name="Hammond S."/>
            <person name="Harley J.L."/>
            <person name="Hart E."/>
            <person name="Heath P.D."/>
            <person name="Ho T.P."/>
            <person name="Hopkins B."/>
            <person name="Horne J."/>
            <person name="Howden P.J."/>
            <person name="Huckle E."/>
            <person name="Hynds C."/>
            <person name="Johnson C."/>
            <person name="Johnson D."/>
            <person name="Kana A."/>
            <person name="Kay M."/>
            <person name="Kimberley A.M."/>
            <person name="Kershaw J.K."/>
            <person name="Kokkinaki M."/>
            <person name="Laird G.K."/>
            <person name="Lawlor S."/>
            <person name="Lee H.M."/>
            <person name="Leongamornlert D.A."/>
            <person name="Laird G."/>
            <person name="Lloyd C."/>
            <person name="Lloyd D.M."/>
            <person name="Loveland J."/>
            <person name="Lovell J."/>
            <person name="McLaren S."/>
            <person name="McLay K.E."/>
            <person name="McMurray A."/>
            <person name="Mashreghi-Mohammadi M."/>
            <person name="Matthews L."/>
            <person name="Milne S."/>
            <person name="Nickerson T."/>
            <person name="Nguyen M."/>
            <person name="Overton-Larty E."/>
            <person name="Palmer S.A."/>
            <person name="Pearce A.V."/>
            <person name="Peck A.I."/>
            <person name="Pelan S."/>
            <person name="Phillimore B."/>
            <person name="Porter K."/>
            <person name="Rice C.M."/>
            <person name="Rogosin A."/>
            <person name="Ross M.T."/>
            <person name="Sarafidou T."/>
            <person name="Sehra H.K."/>
            <person name="Shownkeen R."/>
            <person name="Skuce C.D."/>
            <person name="Smith M."/>
            <person name="Standring L."/>
            <person name="Sycamore N."/>
            <person name="Tester J."/>
            <person name="Thorpe A."/>
            <person name="Torcasso W."/>
            <person name="Tracey A."/>
            <person name="Tromans A."/>
            <person name="Tsolas J."/>
            <person name="Wall M."/>
            <person name="Walsh J."/>
            <person name="Wang H."/>
            <person name="Weinstock K."/>
            <person name="West A.P."/>
            <person name="Willey D.L."/>
            <person name="Whitehead S.L."/>
            <person name="Wilming L."/>
            <person name="Wray P.W."/>
            <person name="Young L."/>
            <person name="Chen Y."/>
            <person name="Lovering R.C."/>
            <person name="Moschonas N.K."/>
            <person name="Siebert R."/>
            <person name="Fechtel K."/>
            <person name="Bentley D."/>
            <person name="Durbin R.M."/>
            <person name="Hubbard T."/>
            <person name="Doucette-Stamm L."/>
            <person name="Beck S."/>
            <person name="Smith D.R."/>
            <person name="Rogers J."/>
        </authorList>
    </citation>
    <scope>NUCLEOTIDE SEQUENCE [LARGE SCALE GENOMIC DNA]</scope>
</reference>
<reference key="4">
    <citation type="journal article" date="2004" name="Genome Res.">
        <title>The status, quality, and expansion of the NIH full-length cDNA project: the Mammalian Gene Collection (MGC).</title>
        <authorList>
            <consortium name="The MGC Project Team"/>
        </authorList>
    </citation>
    <scope>NUCLEOTIDE SEQUENCE [LARGE SCALE MRNA]</scope>
</reference>
<dbReference type="EMBL" id="AB085942">
    <property type="protein sequence ID" value="BAC07175.1"/>
    <property type="molecule type" value="mRNA"/>
</dbReference>
<dbReference type="EMBL" id="AF525737">
    <property type="protein sequence ID" value="AAP80794.1"/>
    <property type="molecule type" value="mRNA"/>
</dbReference>
<dbReference type="EMBL" id="AF525738">
    <property type="protein sequence ID" value="AAP80795.1"/>
    <property type="molecule type" value="Transcribed_RNA"/>
</dbReference>
<dbReference type="EMBL" id="AL360181">
    <property type="status" value="NOT_ANNOTATED_CDS"/>
    <property type="molecule type" value="Genomic_DNA"/>
</dbReference>
<dbReference type="EMBL" id="BC126128">
    <property type="protein sequence ID" value="AAI26129.1"/>
    <property type="molecule type" value="mRNA"/>
</dbReference>
<dbReference type="EMBL" id="BC126485">
    <property type="protein sequence ID" value="AAI26486.1"/>
    <property type="molecule type" value="mRNA"/>
</dbReference>
<dbReference type="EMBL" id="BC146875">
    <property type="protein sequence ID" value="AAI46876.1"/>
    <property type="molecule type" value="mRNA"/>
</dbReference>
<dbReference type="EMBL" id="BC146890">
    <property type="protein sequence ID" value="AAI46891.1"/>
    <property type="molecule type" value="mRNA"/>
</dbReference>
<dbReference type="CCDS" id="CCDS11790.1"/>
<dbReference type="RefSeq" id="NP_683694.1">
    <property type="nucleotide sequence ID" value="NM_148896.5"/>
</dbReference>
<dbReference type="BioGRID" id="129184">
    <property type="interactions" value="33"/>
</dbReference>
<dbReference type="FunCoup" id="Q8NG41">
    <property type="interactions" value="614"/>
</dbReference>
<dbReference type="IntAct" id="Q8NG41">
    <property type="interactions" value="26"/>
</dbReference>
<dbReference type="STRING" id="9606.ENSP00000332766"/>
<dbReference type="iPTMnet" id="Q8NG41"/>
<dbReference type="PhosphoSitePlus" id="Q8NG41"/>
<dbReference type="BioMuta" id="NPB"/>
<dbReference type="jPOST" id="Q8NG41"/>
<dbReference type="MassIVE" id="Q8NG41"/>
<dbReference type="PaxDb" id="9606-ENSP00000332766"/>
<dbReference type="PeptideAtlas" id="Q8NG41"/>
<dbReference type="Antibodypedia" id="32928">
    <property type="antibodies" value="40 antibodies from 16 providers"/>
</dbReference>
<dbReference type="DNASU" id="256933"/>
<dbReference type="Ensembl" id="ENST00000333383.8">
    <property type="protein sequence ID" value="ENSP00000332766.7"/>
    <property type="gene ID" value="ENSG00000183979.8"/>
</dbReference>
<dbReference type="GeneID" id="256933"/>
<dbReference type="KEGG" id="hsa:256933"/>
<dbReference type="MANE-Select" id="ENST00000333383.8">
    <property type="protein sequence ID" value="ENSP00000332766.7"/>
    <property type="RefSeq nucleotide sequence ID" value="NM_148896.5"/>
    <property type="RefSeq protein sequence ID" value="NP_683694.1"/>
</dbReference>
<dbReference type="UCSC" id="uc002kcd.4">
    <property type="organism name" value="human"/>
</dbReference>
<dbReference type="AGR" id="HGNC:30099"/>
<dbReference type="CTD" id="256933"/>
<dbReference type="DisGeNET" id="256933"/>
<dbReference type="GeneCards" id="NPB"/>
<dbReference type="HGNC" id="HGNC:30099">
    <property type="gene designation" value="NPB"/>
</dbReference>
<dbReference type="HPA" id="ENSG00000183979">
    <property type="expression patterns" value="Tissue enriched (brain)"/>
</dbReference>
<dbReference type="MIM" id="607996">
    <property type="type" value="gene"/>
</dbReference>
<dbReference type="neXtProt" id="NX_Q8NG41"/>
<dbReference type="OpenTargets" id="ENSG00000183979"/>
<dbReference type="PharmGKB" id="PA142671255"/>
<dbReference type="VEuPathDB" id="HostDB:ENSG00000183979"/>
<dbReference type="eggNOG" id="ENOG502S25S">
    <property type="taxonomic scope" value="Eukaryota"/>
</dbReference>
<dbReference type="GeneTree" id="ENSGT00940000158204"/>
<dbReference type="HOGENOM" id="CLU_1991876_0_0_1"/>
<dbReference type="InParanoid" id="Q8NG41"/>
<dbReference type="OrthoDB" id="9942334at2759"/>
<dbReference type="PAN-GO" id="Q8NG41">
    <property type="GO annotations" value="3 GO annotations based on evolutionary models"/>
</dbReference>
<dbReference type="PhylomeDB" id="Q8NG41"/>
<dbReference type="TreeFam" id="TF333179"/>
<dbReference type="PathwayCommons" id="Q8NG41"/>
<dbReference type="Reactome" id="R-HSA-375276">
    <property type="pathway name" value="Peptide ligand-binding receptors"/>
</dbReference>
<dbReference type="Reactome" id="R-HSA-418594">
    <property type="pathway name" value="G alpha (i) signalling events"/>
</dbReference>
<dbReference type="SignaLink" id="Q8NG41"/>
<dbReference type="BioGRID-ORCS" id="256933">
    <property type="hits" value="202 hits in 1074 CRISPR screens"/>
</dbReference>
<dbReference type="GenomeRNAi" id="256933"/>
<dbReference type="Pharos" id="Q8NG41">
    <property type="development level" value="Tdark"/>
</dbReference>
<dbReference type="PRO" id="PR:Q8NG41"/>
<dbReference type="Proteomes" id="UP000005640">
    <property type="component" value="Chromosome 17"/>
</dbReference>
<dbReference type="RNAct" id="Q8NG41">
    <property type="molecule type" value="protein"/>
</dbReference>
<dbReference type="Bgee" id="ENSG00000183979">
    <property type="expression patterns" value="Expressed in C1 segment of cervical spinal cord and 106 other cell types or tissues"/>
</dbReference>
<dbReference type="ExpressionAtlas" id="Q8NG41">
    <property type="expression patterns" value="baseline and differential"/>
</dbReference>
<dbReference type="GO" id="GO:0005576">
    <property type="term" value="C:extracellular region"/>
    <property type="evidence" value="ECO:0000304"/>
    <property type="project" value="Reactome"/>
</dbReference>
<dbReference type="GO" id="GO:0001664">
    <property type="term" value="F:G protein-coupled receptor binding"/>
    <property type="evidence" value="ECO:0000318"/>
    <property type="project" value="GO_Central"/>
</dbReference>
<dbReference type="GO" id="GO:0007631">
    <property type="term" value="P:feeding behavior"/>
    <property type="evidence" value="ECO:0000318"/>
    <property type="project" value="GO_Central"/>
</dbReference>
<dbReference type="GO" id="GO:0007186">
    <property type="term" value="P:G protein-coupled receptor signaling pathway"/>
    <property type="evidence" value="ECO:0000314"/>
    <property type="project" value="HGNC-UCL"/>
</dbReference>
<dbReference type="GO" id="GO:0007218">
    <property type="term" value="P:neuropeptide signaling pathway"/>
    <property type="evidence" value="ECO:0007669"/>
    <property type="project" value="UniProtKB-KW"/>
</dbReference>
<dbReference type="InterPro" id="IPR013298">
    <property type="entry name" value="Neuropept_B_pre"/>
</dbReference>
<dbReference type="InterPro" id="IPR013297">
    <property type="entry name" value="Neuropept_BW_pre"/>
</dbReference>
<dbReference type="PANTHER" id="PTHR28553">
    <property type="entry name" value="NEUROPEPTIDE B"/>
    <property type="match status" value="1"/>
</dbReference>
<dbReference type="PANTHER" id="PTHR28553:SF1">
    <property type="entry name" value="NEUROPEPTIDE B"/>
    <property type="match status" value="1"/>
</dbReference>
<dbReference type="Pfam" id="PF15180">
    <property type="entry name" value="NPBW"/>
    <property type="match status" value="1"/>
</dbReference>
<dbReference type="PRINTS" id="PR01888">
    <property type="entry name" value="NROPEPTIDEBW"/>
</dbReference>
<dbReference type="PRINTS" id="PR01889">
    <property type="entry name" value="PPNRPEPTIDEB"/>
</dbReference>
<accession>Q8NG41</accession>
<accession>A0AUX9</accession>
<accession>A6NJD6</accession>
<accession>B9EJC3</accession>
<organism>
    <name type="scientific">Homo sapiens</name>
    <name type="common">Human</name>
    <dbReference type="NCBI Taxonomy" id="9606"/>
    <lineage>
        <taxon>Eukaryota</taxon>
        <taxon>Metazoa</taxon>
        <taxon>Chordata</taxon>
        <taxon>Craniata</taxon>
        <taxon>Vertebrata</taxon>
        <taxon>Euteleostomi</taxon>
        <taxon>Mammalia</taxon>
        <taxon>Eutheria</taxon>
        <taxon>Euarchontoglires</taxon>
        <taxon>Primates</taxon>
        <taxon>Haplorrhini</taxon>
        <taxon>Catarrhini</taxon>
        <taxon>Hominidae</taxon>
        <taxon>Homo</taxon>
    </lineage>
</organism>
<comment type="function">
    <text evidence="1">May be involved in the regulation of feeding, neuroendocrine system, memory, learning and in the afferent pain pathway.</text>
</comment>
<comment type="subcellular location">
    <subcellularLocation>
        <location>Secreted</location>
    </subcellularLocation>
</comment>
<comment type="tissue specificity">
    <text>Widely expressed in the central nervous system. High levels are found in substantia nigra, hypothalamus, hippocampus, spinal cord, placenta and fetal brain; lower levels are found in testis, uterus and ovary. Also detected at high levels in colorectal adenocarcinoma.</text>
</comment>
<comment type="similarity">
    <text evidence="4">Belongs to the neuropeptide B/W family.</text>
</comment>
<name>NPB_HUMAN</name>
<feature type="signal peptide" evidence="2">
    <location>
        <begin position="1"/>
        <end position="24"/>
    </location>
</feature>
<feature type="peptide" id="PRO_0000019836" description="Neuropeptide B-29">
    <location>
        <begin position="25"/>
        <end position="53"/>
    </location>
</feature>
<feature type="peptide" id="PRO_0000019837" description="Neuropeptide B-23">
    <location>
        <begin position="25"/>
        <end position="48"/>
    </location>
</feature>
<feature type="propeptide" id="PRO_0000019838" evidence="2">
    <location>
        <begin position="56"/>
        <end position="125"/>
    </location>
</feature>
<feature type="region of interest" description="Disordered" evidence="3">
    <location>
        <begin position="54"/>
        <end position="73"/>
    </location>
</feature>
<sequence length="125" mass="13097">MARSATLAAAALALCLLLAPPGLAWYKPAAGHSSYSVGRAAGLLSGLRRSPYARRSQPYRGAEPPGGAGASPELQLHPRLRSLAVCVQDVAPNLQRCERLPDGRGTYQCKANVFLSLRAADCLAA</sequence>
<evidence type="ECO:0000250" key="1"/>
<evidence type="ECO:0000255" key="2"/>
<evidence type="ECO:0000256" key="3">
    <source>
        <dbReference type="SAM" id="MobiDB-lite"/>
    </source>
</evidence>
<evidence type="ECO:0000305" key="4"/>
<protein>
    <recommendedName>
        <fullName>Neuropeptide B</fullName>
    </recommendedName>
    <alternativeName>
        <fullName>Preproprotein L7</fullName>
        <shortName>hPPL7</shortName>
    </alternativeName>
    <component>
        <recommendedName>
            <fullName>Neuropeptide B-23</fullName>
            <shortName>NPB23</shortName>
            <shortName>hL7</shortName>
        </recommendedName>
    </component>
    <component>
        <recommendedName>
            <fullName>Neuropeptide B-29</fullName>
            <shortName>NPB29</shortName>
            <shortName>hL7C</shortName>
        </recommendedName>
    </component>
</protein>
<gene>
    <name type="primary">NPB</name>
    <name type="synonym">PPL7</name>
    <name type="synonym">PPNPB</name>
</gene>